<keyword id="KW-0012">Acyltransferase</keyword>
<keyword id="KW-0511">Multifunctional enzyme</keyword>
<keyword id="KW-0596">Phosphopantetheine</keyword>
<keyword id="KW-0597">Phosphoprotein</keyword>
<keyword id="KW-0808">Transferase</keyword>
<sequence>MAAHNILLFGDQADAPIPMIRRIVEKSRYSKNLEYFLQSAVDNVQLEVAKLTPAERETVGSFQSVQDLITALTSKSDRHGIAQMVLVFIARIGELILHAESNPTLLSSSTPLLSLGICGGLLPAAAAAVATNVGELVEVASYMAGVNCRVAAMISRRSLQIEDNAGSWAFSVLGKLVMQLPTILDGFHNEQSIPRHRRAYIAISTPTWATVFGPPSVLKKLLETSAALSKSDITILPAFGAVHAGHLAAPEFEELVDESPLLNKSIKSGYKLLSGSKYAPFAGSSLRDLLPQIMLDIFQNSTNPSRLFEVGGSYLQKGKELSLYMLGATSYLVLLRRSLHAQGFDVALKTNAPILQASELRGGSGSVAIIGMSGQFPGASSVDEMWELLMQREELHKKIPSDRFNADDYLDETGRGFNAITTAYGCFLEHPGLFDHKMFNVSPREAMQMDPGQRLVMHAVYEALEDAGVANNGSVATDSKRIGTYIGDGSDDWRELQQPHGVDKYILQGTQRSFTPGRLNHHFKWEGATFCVDSACGSTASAVGLAYRALVNRDCDTAIAGGSNIIATPFWQSALSKGGFLSTTGGCKTFRGDADGYCRGEAIGVIVLKRLEDALYDNDNIISVIRSYARNHSADTVSITRPHVPAQERVYRRVLQKAGLEPNDISYVEMHGTGTTAGDSAELESVVNILAQKGERETPLVVGAIKANLGHSEAASGISSIMKAAIMFRKGVIPPQVGIPQKLGNFECLERGSVLIPGNPIPYTRQSIGKKRTMIVNNFDAAGGNSCFVLEEPPVPQIKAPDPRPYHVVTVSAHCPQSLERNEQLLRQFLLDNADISLADLAYTTTARRMHHSMRSAYSGNSIKAIVDGINRVLSKKKEAPTARKPPVVFAFTGQGAHYAGMGADLFRSSQAFRATITSLQRICESHGFPPFVQLISKSESPVEKATTVQIHLALIALEIALADLWKTWGIAPDLVIGHSIGEYAALYAAGVLSATDAMYIVGRRATLIQENCKEGTHGMLSISGTSDDVAAILSDERIMSSCEVACRNSPGMIVLSGEHEELLQIEGLLKDQQIKCRLLDVPYAMHSHQMDGIVEGLREAAQGVLFGTPRVKVISTLLGVEHTKFDSDYLVRHTRQAVNFEQAISHCTSHGLVDKTSLWLEIGPNPVSLGLIRSNTNVTSDRALHSLKNGDDNWKSISATLASFYKAGMSIQWREYHRDFANNLSLITLPKYAFDTRDFWMKYTEGQRHSEVQPISTCLHRLVKQEDTAKEQHATFTAEIGHPSLLKIIKGHKLSGITVCPAGVFSEMSLTAARYLLTNGSSKASFPSLSVLDTQIDHPIMPKADSKQTVQVEINRSKQSNEFFVSIADQAKPSVINSKCVVRLRDEHAFDLERRQMLEVIQPKIAKLTKAAAGGRANRFQGKLFYRLFANLMDYTGQYEGVQEAIVSSDFTEALATVQLPKAQSSGESWTLSPYWIDALTHLAGFLFNGNPMNSGDYVFIGIHMERMEIVAKDLSTDVTYQCYAFIEQSEGSDIYRGHVYILDGDLIVGFLEGARFRKMPRTTLHRILGKAEPVKNTKQVPHPTTNGSAIANGVNRNPSHNEPSTPPVANGVNGTNGDQSDRKSLYSVLVQQLIEETGMEESELTPSTFFVEIGVDSLMSISILAALKAETGTELNASFLMDYPTLEDAQRELRRLEGKDSVNSNDQSTMVNGKEKTRECNVVLMQGPSSSTSRKPVFLIADGAGSAAAYIHFPKLGQDLPVYAVESPWVNDPENFVCSFDEAAAMYLAAIRSKQPHGPYILGGWSAGGVFAYEVARLLLEAGERVLGLIIIDITGPRHEDRSKVESPTMEIIDQIGMLSGIERNFDDTTTQSRRLKQHMLSTVTCFSKMDPTPMSPGRHPDCTFVIWAKKDILPKAALDTLPAGLNAWFYPSSHDLGPNGWDALVGNKMEYFQIEGDHFSIMTAPEVTQLGKIIQEAIGKIS</sequence>
<proteinExistence type="evidence at transcript level"/>
<evidence type="ECO:0000255" key="1"/>
<evidence type="ECO:0000255" key="2">
    <source>
        <dbReference type="PROSITE-ProRule" id="PRU00258"/>
    </source>
</evidence>
<evidence type="ECO:0000255" key="3">
    <source>
        <dbReference type="PROSITE-ProRule" id="PRU01348"/>
    </source>
</evidence>
<evidence type="ECO:0000255" key="4">
    <source>
        <dbReference type="PROSITE-ProRule" id="PRU01363"/>
    </source>
</evidence>
<evidence type="ECO:0000255" key="5">
    <source>
        <dbReference type="PROSITE-ProRule" id="PRU10022"/>
    </source>
</evidence>
<evidence type="ECO:0000256" key="6">
    <source>
        <dbReference type="SAM" id="MobiDB-lite"/>
    </source>
</evidence>
<evidence type="ECO:0000269" key="7">
    <source>
    </source>
</evidence>
<evidence type="ECO:0000303" key="8">
    <source>
    </source>
</evidence>
<evidence type="ECO:0000305" key="9">
    <source>
    </source>
</evidence>
<reference key="1">
    <citation type="journal article" date="2018" name="Angew. Chem. Int. Ed.">
        <title>Genome mining and comparative biosynthesis of meroterpenoids from two phylogenetically distinct fungi.</title>
        <authorList>
            <person name="Zhang X."/>
            <person name="Wang T.T."/>
            <person name="Xu Q.L."/>
            <person name="Xiong Y."/>
            <person name="Zhang L."/>
            <person name="Han H."/>
            <person name="Xu K."/>
            <person name="Guo W.J."/>
            <person name="Xu Q."/>
            <person name="Tan R.X."/>
            <person name="Ge H.M."/>
        </authorList>
    </citation>
    <scope>NUCLEOTIDE SEQUENCE [MRNA]</scope>
    <scope>DOMAIN</scope>
    <scope>FUNCTION</scope>
    <scope>PATHWAY</scope>
    <source>
        <strain>Z14-w</strain>
    </source>
</reference>
<name>NTNG_NECSZ</name>
<protein>
    <recommendedName>
        <fullName evidence="8">Non-reducing polyketide synthase ntnG</fullName>
        <shortName evidence="8">NR-PKS ntnG</shortName>
        <ecNumber evidence="9">2.3.1.-</ecNumber>
    </recommendedName>
    <alternativeName>
        <fullName evidence="8">Nectripenoid biosynthesis cluster protein G</fullName>
    </alternativeName>
</protein>
<gene>
    <name evidence="8" type="primary">ntnG</name>
</gene>
<comment type="function">
    <text evidence="7 9">Non-reducing polyketide synthase; part of the gene cluster that mediates the biosynthesis of the meroterpenoids nectripenoids A and B, as well as cochliquninone D and isocochliquninone E (PubMed:29797385). The pathway probably begins with the HR-PKS ntnH that catalyzes two chain-extension steps to form a reduced triketide, which then primes the SAT domain in the NR-PKS ntnG to initiate three more cycles of extension to give a linear hexaketide corresponding to the polyketide part of nectripenoids (Probable). The FAD-dependent monooxygenase ntnJ then performs an oxidative decarboxylation at C11 of the ntnH/ntnG product, via an electrophilic aromatic hydroxylation with concomitant ipso-decarboxylation (Probable). The membrane-bound polyprenyl transferase ntnF then introduces a farnesyl group before the FAD-dependent monooxygenase ntnK functions as the first epoxidase on terminal C12'-C13' olefin, followed by a second epoxidation on C7'-C8' catalyzed by ntnA (Probable). The terpene cyclase/mutase ntnI then initiates the sequential tricyclic ring formation through protonation of the terminal epoxide and catalyzes the regioselective and stereoselective 6/6/6-tricyclic ring formation (Probable). The cytochrome P450 monooxygenase ntnM may then hydroxylate C1' (Probable).</text>
</comment>
<comment type="pathway">
    <text evidence="9">Secondary metabolite biosynthesis; terpenoid biosynthesis.</text>
</comment>
<comment type="domain">
    <text evidence="9">Multidomain protein; including a starter unit:ACP transacylase (SAT) that selects the starter unit; a ketosynthase (KS) that catalyzes repeated decarboxylative condensation to elongate the polyketide backbone; a malonyl-CoA:ACP transacylase (MAT) that selects and transfers the extender unit malonyl-CoA; a product template (PT) domain that controls the immediate cyclization regioselectivity of the reactive polyketide backbone; and an acyl-carrier protein (ACP) that serves as the tether of the growing and completed polyketide via its phosphopantetheinyl arm.</text>
</comment>
<comment type="domain">
    <text evidence="9">The SAT domain at the N-terminus facilitates crosstalk between the two PKSs atnH and atnG encoded by the cluster.</text>
</comment>
<comment type="domain">
    <text evidence="9">The release of the polyketide chain from the non-reducing polyketide synthase is mediated by the thioesterase (TE) domain localized at the C-ter of the protein.</text>
</comment>
<dbReference type="EC" id="2.3.1.-" evidence="9"/>
<dbReference type="EMBL" id="MH183000">
    <property type="protein sequence ID" value="AYO60867.1"/>
    <property type="molecule type" value="mRNA"/>
</dbReference>
<dbReference type="SMR" id="A0A455LXK0"/>
<dbReference type="ESTHER" id="necsz-ntng">
    <property type="family name" value="Thioesterase"/>
</dbReference>
<dbReference type="UniPathway" id="UPA00213"/>
<dbReference type="GO" id="GO:0004312">
    <property type="term" value="F:fatty acid synthase activity"/>
    <property type="evidence" value="ECO:0007669"/>
    <property type="project" value="TreeGrafter"/>
</dbReference>
<dbReference type="GO" id="GO:0031177">
    <property type="term" value="F:phosphopantetheine binding"/>
    <property type="evidence" value="ECO:0007669"/>
    <property type="project" value="InterPro"/>
</dbReference>
<dbReference type="GO" id="GO:0006633">
    <property type="term" value="P:fatty acid biosynthetic process"/>
    <property type="evidence" value="ECO:0007669"/>
    <property type="project" value="TreeGrafter"/>
</dbReference>
<dbReference type="GO" id="GO:0044550">
    <property type="term" value="P:secondary metabolite biosynthetic process"/>
    <property type="evidence" value="ECO:0007669"/>
    <property type="project" value="TreeGrafter"/>
</dbReference>
<dbReference type="GO" id="GO:0016114">
    <property type="term" value="P:terpenoid biosynthetic process"/>
    <property type="evidence" value="ECO:0007669"/>
    <property type="project" value="UniProtKB-UniPathway"/>
</dbReference>
<dbReference type="CDD" id="cd00833">
    <property type="entry name" value="PKS"/>
    <property type="match status" value="1"/>
</dbReference>
<dbReference type="Gene3D" id="3.30.70.3290">
    <property type="match status" value="1"/>
</dbReference>
<dbReference type="Gene3D" id="3.40.47.10">
    <property type="match status" value="1"/>
</dbReference>
<dbReference type="Gene3D" id="1.10.1200.10">
    <property type="entry name" value="ACP-like"/>
    <property type="match status" value="1"/>
</dbReference>
<dbReference type="Gene3D" id="3.40.50.1820">
    <property type="entry name" value="alpha/beta hydrolase"/>
    <property type="match status" value="1"/>
</dbReference>
<dbReference type="Gene3D" id="3.40.366.10">
    <property type="entry name" value="Malonyl-Coenzyme A Acyl Carrier Protein, domain 2"/>
    <property type="match status" value="2"/>
</dbReference>
<dbReference type="Gene3D" id="3.10.129.110">
    <property type="entry name" value="Polyketide synthase dehydratase"/>
    <property type="match status" value="1"/>
</dbReference>
<dbReference type="InterPro" id="IPR029058">
    <property type="entry name" value="AB_hydrolase_fold"/>
</dbReference>
<dbReference type="InterPro" id="IPR001227">
    <property type="entry name" value="Ac_transferase_dom_sf"/>
</dbReference>
<dbReference type="InterPro" id="IPR036736">
    <property type="entry name" value="ACP-like_sf"/>
</dbReference>
<dbReference type="InterPro" id="IPR014043">
    <property type="entry name" value="Acyl_transferase_dom"/>
</dbReference>
<dbReference type="InterPro" id="IPR016035">
    <property type="entry name" value="Acyl_Trfase/lysoPLipase"/>
</dbReference>
<dbReference type="InterPro" id="IPR014031">
    <property type="entry name" value="Ketoacyl_synth_C"/>
</dbReference>
<dbReference type="InterPro" id="IPR014030">
    <property type="entry name" value="Ketoacyl_synth_N"/>
</dbReference>
<dbReference type="InterPro" id="IPR016036">
    <property type="entry name" value="Malonyl_transacylase_ACP-bd"/>
</dbReference>
<dbReference type="InterPro" id="IPR020841">
    <property type="entry name" value="PKS_Beta-ketoAc_synthase_dom"/>
</dbReference>
<dbReference type="InterPro" id="IPR042104">
    <property type="entry name" value="PKS_dehydratase_sf"/>
</dbReference>
<dbReference type="InterPro" id="IPR049900">
    <property type="entry name" value="PKS_mFAS_DH"/>
</dbReference>
<dbReference type="InterPro" id="IPR050091">
    <property type="entry name" value="PKS_NRPS_Biosynth_Enz"/>
</dbReference>
<dbReference type="InterPro" id="IPR020806">
    <property type="entry name" value="PKS_PP-bd"/>
</dbReference>
<dbReference type="InterPro" id="IPR009081">
    <property type="entry name" value="PP-bd_ACP"/>
</dbReference>
<dbReference type="InterPro" id="IPR030918">
    <property type="entry name" value="PT_fungal_PKS"/>
</dbReference>
<dbReference type="InterPro" id="IPR032088">
    <property type="entry name" value="SAT"/>
</dbReference>
<dbReference type="InterPro" id="IPR001031">
    <property type="entry name" value="Thioesterase"/>
</dbReference>
<dbReference type="InterPro" id="IPR016039">
    <property type="entry name" value="Thiolase-like"/>
</dbReference>
<dbReference type="NCBIfam" id="TIGR04532">
    <property type="entry name" value="PT_fungal_PKS"/>
    <property type="match status" value="1"/>
</dbReference>
<dbReference type="PANTHER" id="PTHR43775">
    <property type="entry name" value="FATTY ACID SYNTHASE"/>
    <property type="match status" value="1"/>
</dbReference>
<dbReference type="PANTHER" id="PTHR43775:SF37">
    <property type="entry name" value="SI:DKEY-61P9.11"/>
    <property type="match status" value="1"/>
</dbReference>
<dbReference type="Pfam" id="PF00698">
    <property type="entry name" value="Acyl_transf_1"/>
    <property type="match status" value="1"/>
</dbReference>
<dbReference type="Pfam" id="PF22621">
    <property type="entry name" value="CurL-like_PKS_C"/>
    <property type="match status" value="1"/>
</dbReference>
<dbReference type="Pfam" id="PF00109">
    <property type="entry name" value="ketoacyl-synt"/>
    <property type="match status" value="1"/>
</dbReference>
<dbReference type="Pfam" id="PF02801">
    <property type="entry name" value="Ketoacyl-synt_C"/>
    <property type="match status" value="1"/>
</dbReference>
<dbReference type="Pfam" id="PF00550">
    <property type="entry name" value="PP-binding"/>
    <property type="match status" value="1"/>
</dbReference>
<dbReference type="Pfam" id="PF16073">
    <property type="entry name" value="SAT"/>
    <property type="match status" value="1"/>
</dbReference>
<dbReference type="Pfam" id="PF00975">
    <property type="entry name" value="Thioesterase"/>
    <property type="match status" value="1"/>
</dbReference>
<dbReference type="SMART" id="SM00827">
    <property type="entry name" value="PKS_AT"/>
    <property type="match status" value="1"/>
</dbReference>
<dbReference type="SMART" id="SM00825">
    <property type="entry name" value="PKS_KS"/>
    <property type="match status" value="1"/>
</dbReference>
<dbReference type="SMART" id="SM00823">
    <property type="entry name" value="PKS_PP"/>
    <property type="match status" value="1"/>
</dbReference>
<dbReference type="SMART" id="SM01294">
    <property type="entry name" value="PKS_PP_betabranch"/>
    <property type="match status" value="1"/>
</dbReference>
<dbReference type="SUPFAM" id="SSF47336">
    <property type="entry name" value="ACP-like"/>
    <property type="match status" value="1"/>
</dbReference>
<dbReference type="SUPFAM" id="SSF53474">
    <property type="entry name" value="alpha/beta-Hydrolases"/>
    <property type="match status" value="1"/>
</dbReference>
<dbReference type="SUPFAM" id="SSF52151">
    <property type="entry name" value="FabD/lysophospholipase-like"/>
    <property type="match status" value="1"/>
</dbReference>
<dbReference type="SUPFAM" id="SSF55048">
    <property type="entry name" value="Probable ACP-binding domain of malonyl-CoA ACP transacylase"/>
    <property type="match status" value="1"/>
</dbReference>
<dbReference type="SUPFAM" id="SSF53901">
    <property type="entry name" value="Thiolase-like"/>
    <property type="match status" value="1"/>
</dbReference>
<dbReference type="PROSITE" id="PS50075">
    <property type="entry name" value="CARRIER"/>
    <property type="match status" value="1"/>
</dbReference>
<dbReference type="PROSITE" id="PS52004">
    <property type="entry name" value="KS3_2"/>
    <property type="match status" value="1"/>
</dbReference>
<dbReference type="PROSITE" id="PS52019">
    <property type="entry name" value="PKS_MFAS_DH"/>
    <property type="match status" value="1"/>
</dbReference>
<accession>A0A455LXK0</accession>
<feature type="chain" id="PRO_0000452557" description="Non-reducing polyketide synthase ntnG">
    <location>
        <begin position="1"/>
        <end position="1985"/>
    </location>
</feature>
<feature type="domain" description="Ketosynthase family 3 (KS3)" evidence="3 9">
    <location>
        <begin position="364"/>
        <end position="792"/>
    </location>
</feature>
<feature type="domain" description="PKS/mFAS DH" evidence="4">
    <location>
        <begin position="1261"/>
        <end position="1567"/>
    </location>
</feature>
<feature type="domain" description="Carrier" evidence="2 9">
    <location>
        <begin position="1622"/>
        <end position="1699"/>
    </location>
</feature>
<feature type="region of interest" description="N-terminal acylcarrier protein transacylase (SAT) domain" evidence="1 9">
    <location>
        <begin position="7"/>
        <end position="243"/>
    </location>
</feature>
<feature type="region of interest" description="Malonyl-CoA:ACP transacylase (MAT) domain" evidence="1 9">
    <location>
        <begin position="889"/>
        <end position="1148"/>
    </location>
</feature>
<feature type="region of interest" description="N-terminal hotdog fold" evidence="4">
    <location>
        <begin position="1261"/>
        <end position="1392"/>
    </location>
</feature>
<feature type="region of interest" description="Product template (PT) domain" evidence="1 9">
    <location>
        <begin position="1265"/>
        <end position="1566"/>
    </location>
</feature>
<feature type="region of interest" description="C-terminal hotdog fold" evidence="4">
    <location>
        <begin position="1414"/>
        <end position="1567"/>
    </location>
</feature>
<feature type="region of interest" description="Disordered" evidence="6">
    <location>
        <begin position="1578"/>
        <end position="1622"/>
    </location>
</feature>
<feature type="region of interest" description="Thioesterase (TE) domain" evidence="1 9">
    <location>
        <begin position="1719"/>
        <end position="1913"/>
    </location>
</feature>
<feature type="compositionally biased region" description="Polar residues" evidence="6">
    <location>
        <begin position="1578"/>
        <end position="1605"/>
    </location>
</feature>
<feature type="active site" description="For beta-ketoacyl synthase activity" evidence="3">
    <location>
        <position position="536"/>
    </location>
</feature>
<feature type="active site" description="For beta-ketoacyl synthase activity" evidence="3">
    <location>
        <position position="671"/>
    </location>
</feature>
<feature type="active site" description="For beta-ketoacyl synthase activity" evidence="3">
    <location>
        <position position="711"/>
    </location>
</feature>
<feature type="active site" description="For acyl/malonyl transferase activity" evidence="5">
    <location>
        <position position="980"/>
    </location>
</feature>
<feature type="active site" description="Proton acceptor; for dehydratase activity" evidence="4">
    <location>
        <position position="1293"/>
    </location>
</feature>
<feature type="active site" description="Proton donor; for dehydratase activity" evidence="4">
    <location>
        <position position="1479"/>
    </location>
</feature>
<feature type="modified residue" description="O-(pantetheine 4'-phosphoryl)serine" evidence="2">
    <location>
        <position position="1659"/>
    </location>
</feature>
<organism>
    <name type="scientific">Nectria sp</name>
    <dbReference type="NCBI Taxonomy" id="1755444"/>
    <lineage>
        <taxon>Eukaryota</taxon>
        <taxon>Fungi</taxon>
        <taxon>Dikarya</taxon>
        <taxon>Ascomycota</taxon>
        <taxon>Pezizomycotina</taxon>
        <taxon>Sordariomycetes</taxon>
        <taxon>Hypocreomycetidae</taxon>
        <taxon>Hypocreales</taxon>
        <taxon>Nectriaceae</taxon>
        <taxon>Nectria</taxon>
    </lineage>
</organism>